<keyword id="KW-0031">Aminopeptidase</keyword>
<keyword id="KW-0143">Chaperone</keyword>
<keyword id="KW-0150">Chloroplast</keyword>
<keyword id="KW-0378">Hydrolase</keyword>
<keyword id="KW-0464">Manganese</keyword>
<keyword id="KW-0479">Metal-binding</keyword>
<keyword id="KW-0934">Plastid</keyword>
<keyword id="KW-0645">Protease</keyword>
<keyword id="KW-1185">Reference proteome</keyword>
<keyword id="KW-0346">Stress response</keyword>
<keyword id="KW-0809">Transit peptide</keyword>
<reference key="1">
    <citation type="journal article" date="1999" name="Nature">
        <title>Sequence and analysis of chromosome 4 of the plant Arabidopsis thaliana.</title>
        <authorList>
            <person name="Mayer K.F.X."/>
            <person name="Schueller C."/>
            <person name="Wambutt R."/>
            <person name="Murphy G."/>
            <person name="Volckaert G."/>
            <person name="Pohl T."/>
            <person name="Duesterhoeft A."/>
            <person name="Stiekema W."/>
            <person name="Entian K.-D."/>
            <person name="Terryn N."/>
            <person name="Harris B."/>
            <person name="Ansorge W."/>
            <person name="Brandt P."/>
            <person name="Grivell L.A."/>
            <person name="Rieger M."/>
            <person name="Weichselgartner M."/>
            <person name="de Simone V."/>
            <person name="Obermaier B."/>
            <person name="Mache R."/>
            <person name="Mueller M."/>
            <person name="Kreis M."/>
            <person name="Delseny M."/>
            <person name="Puigdomenech P."/>
            <person name="Watson M."/>
            <person name="Schmidtheini T."/>
            <person name="Reichert B."/>
            <person name="Portetelle D."/>
            <person name="Perez-Alonso M."/>
            <person name="Boutry M."/>
            <person name="Bancroft I."/>
            <person name="Vos P."/>
            <person name="Hoheisel J."/>
            <person name="Zimmermann W."/>
            <person name="Wedler H."/>
            <person name="Ridley P."/>
            <person name="Langham S.-A."/>
            <person name="McCullagh B."/>
            <person name="Bilham L."/>
            <person name="Robben J."/>
            <person name="van der Schueren J."/>
            <person name="Grymonprez B."/>
            <person name="Chuang Y.-J."/>
            <person name="Vandenbussche F."/>
            <person name="Braeken M."/>
            <person name="Weltjens I."/>
            <person name="Voet M."/>
            <person name="Bastiaens I."/>
            <person name="Aert R."/>
            <person name="Defoor E."/>
            <person name="Weitzenegger T."/>
            <person name="Bothe G."/>
            <person name="Ramsperger U."/>
            <person name="Hilbert H."/>
            <person name="Braun M."/>
            <person name="Holzer E."/>
            <person name="Brandt A."/>
            <person name="Peters S."/>
            <person name="van Staveren M."/>
            <person name="Dirkse W."/>
            <person name="Mooijman P."/>
            <person name="Klein Lankhorst R."/>
            <person name="Rose M."/>
            <person name="Hauf J."/>
            <person name="Koetter P."/>
            <person name="Berneiser S."/>
            <person name="Hempel S."/>
            <person name="Feldpausch M."/>
            <person name="Lamberth S."/>
            <person name="Van den Daele H."/>
            <person name="De Keyser A."/>
            <person name="Buysshaert C."/>
            <person name="Gielen J."/>
            <person name="Villarroel R."/>
            <person name="De Clercq R."/>
            <person name="van Montagu M."/>
            <person name="Rogers J."/>
            <person name="Cronin A."/>
            <person name="Quail M.A."/>
            <person name="Bray-Allen S."/>
            <person name="Clark L."/>
            <person name="Doggett J."/>
            <person name="Hall S."/>
            <person name="Kay M."/>
            <person name="Lennard N."/>
            <person name="McLay K."/>
            <person name="Mayes R."/>
            <person name="Pettett A."/>
            <person name="Rajandream M.A."/>
            <person name="Lyne M."/>
            <person name="Benes V."/>
            <person name="Rechmann S."/>
            <person name="Borkova D."/>
            <person name="Bloecker H."/>
            <person name="Scharfe M."/>
            <person name="Grimm M."/>
            <person name="Loehnert T.-H."/>
            <person name="Dose S."/>
            <person name="de Haan M."/>
            <person name="Maarse A.C."/>
            <person name="Schaefer M."/>
            <person name="Mueller-Auer S."/>
            <person name="Gabel C."/>
            <person name="Fuchs M."/>
            <person name="Fartmann B."/>
            <person name="Granderath K."/>
            <person name="Dauner D."/>
            <person name="Herzl A."/>
            <person name="Neumann S."/>
            <person name="Argiriou A."/>
            <person name="Vitale D."/>
            <person name="Liguori R."/>
            <person name="Piravandi E."/>
            <person name="Massenet O."/>
            <person name="Quigley F."/>
            <person name="Clabauld G."/>
            <person name="Muendlein A."/>
            <person name="Felber R."/>
            <person name="Schnabl S."/>
            <person name="Hiller R."/>
            <person name="Schmidt W."/>
            <person name="Lecharny A."/>
            <person name="Aubourg S."/>
            <person name="Chefdor F."/>
            <person name="Cooke R."/>
            <person name="Berger C."/>
            <person name="Monfort A."/>
            <person name="Casacuberta E."/>
            <person name="Gibbons T."/>
            <person name="Weber N."/>
            <person name="Vandenbol M."/>
            <person name="Bargues M."/>
            <person name="Terol J."/>
            <person name="Torres A."/>
            <person name="Perez-Perez A."/>
            <person name="Purnelle B."/>
            <person name="Bent E."/>
            <person name="Johnson S."/>
            <person name="Tacon D."/>
            <person name="Jesse T."/>
            <person name="Heijnen L."/>
            <person name="Schwarz S."/>
            <person name="Scholler P."/>
            <person name="Heber S."/>
            <person name="Francs P."/>
            <person name="Bielke C."/>
            <person name="Frishman D."/>
            <person name="Haase D."/>
            <person name="Lemcke K."/>
            <person name="Mewes H.-W."/>
            <person name="Stocker S."/>
            <person name="Zaccaria P."/>
            <person name="Bevan M."/>
            <person name="Wilson R.K."/>
            <person name="de la Bastide M."/>
            <person name="Habermann K."/>
            <person name="Parnell L."/>
            <person name="Dedhia N."/>
            <person name="Gnoj L."/>
            <person name="Schutz K."/>
            <person name="Huang E."/>
            <person name="Spiegel L."/>
            <person name="Sekhon M."/>
            <person name="Murray J."/>
            <person name="Sheet P."/>
            <person name="Cordes M."/>
            <person name="Abu-Threideh J."/>
            <person name="Stoneking T."/>
            <person name="Kalicki J."/>
            <person name="Graves T."/>
            <person name="Harmon G."/>
            <person name="Edwards J."/>
            <person name="Latreille P."/>
            <person name="Courtney L."/>
            <person name="Cloud J."/>
            <person name="Abbott A."/>
            <person name="Scott K."/>
            <person name="Johnson D."/>
            <person name="Minx P."/>
            <person name="Bentley D."/>
            <person name="Fulton B."/>
            <person name="Miller N."/>
            <person name="Greco T."/>
            <person name="Kemp K."/>
            <person name="Kramer J."/>
            <person name="Fulton L."/>
            <person name="Mardis E."/>
            <person name="Dante M."/>
            <person name="Pepin K."/>
            <person name="Hillier L.W."/>
            <person name="Nelson J."/>
            <person name="Spieth J."/>
            <person name="Ryan E."/>
            <person name="Andrews S."/>
            <person name="Geisel C."/>
            <person name="Layman D."/>
            <person name="Du H."/>
            <person name="Ali J."/>
            <person name="Berghoff A."/>
            <person name="Jones K."/>
            <person name="Drone K."/>
            <person name="Cotton M."/>
            <person name="Joshu C."/>
            <person name="Antonoiu B."/>
            <person name="Zidanic M."/>
            <person name="Strong C."/>
            <person name="Sun H."/>
            <person name="Lamar B."/>
            <person name="Yordan C."/>
            <person name="Ma P."/>
            <person name="Zhong J."/>
            <person name="Preston R."/>
            <person name="Vil D."/>
            <person name="Shekher M."/>
            <person name="Matero A."/>
            <person name="Shah R."/>
            <person name="Swaby I.K."/>
            <person name="O'Shaughnessy A."/>
            <person name="Rodriguez M."/>
            <person name="Hoffman J."/>
            <person name="Till S."/>
            <person name="Granat S."/>
            <person name="Shohdy N."/>
            <person name="Hasegawa A."/>
            <person name="Hameed A."/>
            <person name="Lodhi M."/>
            <person name="Johnson A."/>
            <person name="Chen E."/>
            <person name="Marra M.A."/>
            <person name="Martienssen R."/>
            <person name="McCombie W.R."/>
        </authorList>
    </citation>
    <scope>NUCLEOTIDE SEQUENCE [LARGE SCALE GENOMIC DNA]</scope>
    <source>
        <strain>cv. Columbia</strain>
    </source>
</reference>
<reference key="2">
    <citation type="journal article" date="2017" name="Plant J.">
        <title>Araport11: a complete reannotation of the Arabidopsis thaliana reference genome.</title>
        <authorList>
            <person name="Cheng C.Y."/>
            <person name="Krishnakumar V."/>
            <person name="Chan A.P."/>
            <person name="Thibaud-Nissen F."/>
            <person name="Schobel S."/>
            <person name="Town C.D."/>
        </authorList>
    </citation>
    <scope>GENOME REANNOTATION</scope>
    <source>
        <strain>cv. Columbia</strain>
    </source>
</reference>
<reference key="3">
    <citation type="journal article" date="2003" name="Science">
        <title>Empirical analysis of transcriptional activity in the Arabidopsis genome.</title>
        <authorList>
            <person name="Yamada K."/>
            <person name="Lim J."/>
            <person name="Dale J.M."/>
            <person name="Chen H."/>
            <person name="Shinn P."/>
            <person name="Palm C.J."/>
            <person name="Southwick A.M."/>
            <person name="Wu H.C."/>
            <person name="Kim C.J."/>
            <person name="Nguyen M."/>
            <person name="Pham P.K."/>
            <person name="Cheuk R.F."/>
            <person name="Karlin-Newmann G."/>
            <person name="Liu S.X."/>
            <person name="Lam B."/>
            <person name="Sakano H."/>
            <person name="Wu T."/>
            <person name="Yu G."/>
            <person name="Miranda M."/>
            <person name="Quach H.L."/>
            <person name="Tripp M."/>
            <person name="Chang C.H."/>
            <person name="Lee J.M."/>
            <person name="Toriumi M.J."/>
            <person name="Chan M.M."/>
            <person name="Tang C.C."/>
            <person name="Onodera C.S."/>
            <person name="Deng J.M."/>
            <person name="Akiyama K."/>
            <person name="Ansari Y."/>
            <person name="Arakawa T."/>
            <person name="Banh J."/>
            <person name="Banno F."/>
            <person name="Bowser L."/>
            <person name="Brooks S.Y."/>
            <person name="Carninci P."/>
            <person name="Chao Q."/>
            <person name="Choy N."/>
            <person name="Enju A."/>
            <person name="Goldsmith A.D."/>
            <person name="Gurjal M."/>
            <person name="Hansen N.F."/>
            <person name="Hayashizaki Y."/>
            <person name="Johnson-Hopson C."/>
            <person name="Hsuan V.W."/>
            <person name="Iida K."/>
            <person name="Karnes M."/>
            <person name="Khan S."/>
            <person name="Koesema E."/>
            <person name="Ishida J."/>
            <person name="Jiang P.X."/>
            <person name="Jones T."/>
            <person name="Kawai J."/>
            <person name="Kamiya A."/>
            <person name="Meyers C."/>
            <person name="Nakajima M."/>
            <person name="Narusaka M."/>
            <person name="Seki M."/>
            <person name="Sakurai T."/>
            <person name="Satou M."/>
            <person name="Tamse R."/>
            <person name="Vaysberg M."/>
            <person name="Wallender E.K."/>
            <person name="Wong C."/>
            <person name="Yamamura Y."/>
            <person name="Yuan S."/>
            <person name="Shinozaki K."/>
            <person name="Davis R.W."/>
            <person name="Theologis A."/>
            <person name="Ecker J.R."/>
        </authorList>
    </citation>
    <scope>NUCLEOTIDE SEQUENCE [LARGE SCALE MRNA]</scope>
    <source>
        <strain>cv. Columbia</strain>
    </source>
</reference>
<reference key="4">
    <citation type="journal article" date="2012" name="J. Biol. Chem.">
        <title>Plant leucine aminopeptidases moonlight as molecular chaperones to alleviate stress-induced damage.</title>
        <authorList>
            <person name="Scranton M.A."/>
            <person name="Yee A."/>
            <person name="Park S.-Y."/>
            <person name="Walling L.L."/>
        </authorList>
    </citation>
    <scope>FUNCTION</scope>
    <source>
        <strain>cv. Columbia</strain>
    </source>
</reference>
<reference key="5">
    <citation type="journal article" date="2015" name="Biochem. J.">
        <title>Defining the cytosolic pathway of glutathione degradation in Arabidopsis thaliana: role of the ChaC/GCG family of gamma-glutamyl cyclotransferases as glutathione-degrading enzymes and AtLAP1 as the Cys-Gly peptidase.</title>
        <authorList>
            <person name="Kumar S."/>
            <person name="Kaur A."/>
            <person name="Chattopadhyay B."/>
            <person name="Bachhawat A.K."/>
        </authorList>
    </citation>
    <scope>FUNCTION</scope>
</reference>
<protein>
    <recommendedName>
        <fullName>Leucine aminopeptidase 2, chloroplastic</fullName>
        <ecNumber evidence="2">3.4.11.1</ecNumber>
    </recommendedName>
    <alternativeName>
        <fullName>Leucyl aminopeptidase 2</fullName>
        <shortName evidence="7">AtLAP2</shortName>
    </alternativeName>
    <alternativeName>
        <fullName>Proline aminopeptidase 2</fullName>
        <ecNumber evidence="1">3.4.11.5</ecNumber>
    </alternativeName>
    <alternativeName>
        <fullName>Prolyl aminopeptidase 2</fullName>
    </alternativeName>
</protein>
<organism>
    <name type="scientific">Arabidopsis thaliana</name>
    <name type="common">Mouse-ear cress</name>
    <dbReference type="NCBI Taxonomy" id="3702"/>
    <lineage>
        <taxon>Eukaryota</taxon>
        <taxon>Viridiplantae</taxon>
        <taxon>Streptophyta</taxon>
        <taxon>Embryophyta</taxon>
        <taxon>Tracheophyta</taxon>
        <taxon>Spermatophyta</taxon>
        <taxon>Magnoliopsida</taxon>
        <taxon>eudicotyledons</taxon>
        <taxon>Gunneridae</taxon>
        <taxon>Pentapetalae</taxon>
        <taxon>rosids</taxon>
        <taxon>malvids</taxon>
        <taxon>Brassicales</taxon>
        <taxon>Brassicaceae</taxon>
        <taxon>Camelineae</taxon>
        <taxon>Arabidopsis</taxon>
    </lineage>
</organism>
<comment type="function">
    <text evidence="2 5 6">Presumably involved in the processing and regular turnover of intracellular proteins. Catalyzes the removal of unsubstituted N-terminal amino acids from various peptides (By similarity). Possesses leucine aminopeptidase activity against the model substrate leucine-amido methyl coumarin (PubMed:22493451). Does not seem to possess Cys-Gly dipeptidase activity (PubMed:25716890).</text>
</comment>
<comment type="function">
    <text evidence="5">Functions as a molecular chaperone to protect proteins from heat-induced damage.</text>
</comment>
<comment type="catalytic activity">
    <reaction evidence="2">
        <text>Release of an N-terminal amino acid, Xaa-|-Yaa-, in which Xaa is preferably Leu, but may be other amino acids including Pro although not Arg or Lys, and Yaa may be Pro. Amino acid amides and methyl esters are also readily hydrolyzed, but rates on arylamides are exceedingly low.</text>
        <dbReference type="EC" id="3.4.11.1"/>
    </reaction>
</comment>
<comment type="catalytic activity">
    <reaction evidence="1">
        <text>Release of N-terminal proline from a peptide.</text>
        <dbReference type="EC" id="3.4.11.5"/>
    </reaction>
</comment>
<comment type="cofactor">
    <cofactor evidence="2">
        <name>Mn(2+)</name>
        <dbReference type="ChEBI" id="CHEBI:29035"/>
    </cofactor>
    <text evidence="2">Binds 2 Mn(2+) ions per subunit.</text>
</comment>
<comment type="subunit">
    <text evidence="3">Homohexamer (dimer of homotrimers).</text>
</comment>
<comment type="subcellular location">
    <subcellularLocation>
        <location evidence="8">Plastid</location>
        <location evidence="8">Chloroplast</location>
    </subcellularLocation>
</comment>
<comment type="similarity">
    <text evidence="8">Belongs to the peptidase M17 family.</text>
</comment>
<comment type="sequence caution" evidence="8">
    <conflict type="erroneous gene model prediction">
        <sequence resource="EMBL-CDS" id="CAA18201"/>
    </conflict>
</comment>
<comment type="sequence caution" evidence="8">
    <conflict type="erroneous gene model prediction">
        <sequence resource="EMBL-CDS" id="CAB79810"/>
    </conflict>
</comment>
<proteinExistence type="evidence at transcript level"/>
<accession>Q944P7</accession>
<accession>O65557</accession>
<evidence type="ECO:0000250" key="1">
    <source>
        <dbReference type="UniProtKB" id="P28839"/>
    </source>
</evidence>
<evidence type="ECO:0000250" key="2">
    <source>
        <dbReference type="UniProtKB" id="P30184"/>
    </source>
</evidence>
<evidence type="ECO:0000250" key="3">
    <source>
        <dbReference type="UniProtKB" id="Q10712"/>
    </source>
</evidence>
<evidence type="ECO:0000255" key="4"/>
<evidence type="ECO:0000269" key="5">
    <source>
    </source>
</evidence>
<evidence type="ECO:0000269" key="6">
    <source>
    </source>
</evidence>
<evidence type="ECO:0000303" key="7">
    <source>
    </source>
</evidence>
<evidence type="ECO:0000305" key="8"/>
<dbReference type="EC" id="3.4.11.1" evidence="2"/>
<dbReference type="EC" id="3.4.11.5" evidence="1"/>
<dbReference type="EMBL" id="AL022198">
    <property type="protein sequence ID" value="CAA18201.1"/>
    <property type="status" value="ALT_SEQ"/>
    <property type="molecule type" value="Genomic_DNA"/>
</dbReference>
<dbReference type="EMBL" id="AL161577">
    <property type="protein sequence ID" value="CAB79810.1"/>
    <property type="status" value="ALT_SEQ"/>
    <property type="molecule type" value="Genomic_DNA"/>
</dbReference>
<dbReference type="EMBL" id="CP002687">
    <property type="protein sequence ID" value="AEE85830.1"/>
    <property type="molecule type" value="Genomic_DNA"/>
</dbReference>
<dbReference type="EMBL" id="AF424634">
    <property type="protein sequence ID" value="AAL11627.1"/>
    <property type="molecule type" value="mRNA"/>
</dbReference>
<dbReference type="EMBL" id="BT002652">
    <property type="protein sequence ID" value="AAO11568.1"/>
    <property type="molecule type" value="mRNA"/>
</dbReference>
<dbReference type="PIR" id="A85362">
    <property type="entry name" value="A85362"/>
</dbReference>
<dbReference type="RefSeq" id="NP_194821.1">
    <property type="nucleotide sequence ID" value="NM_119239.3"/>
</dbReference>
<dbReference type="SMR" id="Q944P7"/>
<dbReference type="BioGRID" id="14503">
    <property type="interactions" value="6"/>
</dbReference>
<dbReference type="FunCoup" id="Q944P7">
    <property type="interactions" value="2043"/>
</dbReference>
<dbReference type="STRING" id="3702.Q944P7"/>
<dbReference type="MEROPS" id="M17.A01"/>
<dbReference type="GlyGen" id="Q944P7">
    <property type="glycosylation" value="1 site"/>
</dbReference>
<dbReference type="PaxDb" id="3702-AT4G30920.1"/>
<dbReference type="ProteomicsDB" id="244413"/>
<dbReference type="EnsemblPlants" id="AT4G30920.1">
    <property type="protein sequence ID" value="AT4G30920.1"/>
    <property type="gene ID" value="AT4G30920"/>
</dbReference>
<dbReference type="GeneID" id="829216"/>
<dbReference type="Gramene" id="AT4G30920.1">
    <property type="protein sequence ID" value="AT4G30920.1"/>
    <property type="gene ID" value="AT4G30920"/>
</dbReference>
<dbReference type="KEGG" id="ath:AT4G30920"/>
<dbReference type="Araport" id="AT4G30920"/>
<dbReference type="TAIR" id="AT4G30920">
    <property type="gene designation" value="LAP2"/>
</dbReference>
<dbReference type="eggNOG" id="KOG2597">
    <property type="taxonomic scope" value="Eukaryota"/>
</dbReference>
<dbReference type="HOGENOM" id="CLU_013734_5_1_1"/>
<dbReference type="InParanoid" id="Q944P7"/>
<dbReference type="OMA" id="DSPANQM"/>
<dbReference type="PhylomeDB" id="Q944P7"/>
<dbReference type="PRO" id="PR:Q944P7"/>
<dbReference type="Proteomes" id="UP000006548">
    <property type="component" value="Chromosome 4"/>
</dbReference>
<dbReference type="ExpressionAtlas" id="Q944P7">
    <property type="expression patterns" value="baseline and differential"/>
</dbReference>
<dbReference type="GO" id="GO:0009507">
    <property type="term" value="C:chloroplast"/>
    <property type="evidence" value="ECO:0007005"/>
    <property type="project" value="TAIR"/>
</dbReference>
<dbReference type="GO" id="GO:0009570">
    <property type="term" value="C:chloroplast stroma"/>
    <property type="evidence" value="ECO:0007005"/>
    <property type="project" value="TAIR"/>
</dbReference>
<dbReference type="GO" id="GO:0005886">
    <property type="term" value="C:plasma membrane"/>
    <property type="evidence" value="ECO:0007005"/>
    <property type="project" value="TAIR"/>
</dbReference>
<dbReference type="GO" id="GO:0005773">
    <property type="term" value="C:vacuole"/>
    <property type="evidence" value="ECO:0007005"/>
    <property type="project" value="TAIR"/>
</dbReference>
<dbReference type="GO" id="GO:0004177">
    <property type="term" value="F:aminopeptidase activity"/>
    <property type="evidence" value="ECO:0000314"/>
    <property type="project" value="UniProtKB"/>
</dbReference>
<dbReference type="GO" id="GO:0000287">
    <property type="term" value="F:magnesium ion binding"/>
    <property type="evidence" value="ECO:0000250"/>
    <property type="project" value="UniProtKB"/>
</dbReference>
<dbReference type="GO" id="GO:0030145">
    <property type="term" value="F:manganese ion binding"/>
    <property type="evidence" value="ECO:0007669"/>
    <property type="project" value="InterPro"/>
</dbReference>
<dbReference type="GO" id="GO:0070006">
    <property type="term" value="F:metalloaminopeptidase activity"/>
    <property type="evidence" value="ECO:0007669"/>
    <property type="project" value="InterPro"/>
</dbReference>
<dbReference type="GO" id="GO:0044183">
    <property type="term" value="F:protein folding chaperone"/>
    <property type="evidence" value="ECO:0000314"/>
    <property type="project" value="UniProtKB"/>
</dbReference>
<dbReference type="GO" id="GO:0034605">
    <property type="term" value="P:cellular response to heat"/>
    <property type="evidence" value="ECO:0000314"/>
    <property type="project" value="UniProtKB"/>
</dbReference>
<dbReference type="GO" id="GO:0010150">
    <property type="term" value="P:leaf senescence"/>
    <property type="evidence" value="ECO:0000315"/>
    <property type="project" value="TAIR"/>
</dbReference>
<dbReference type="GO" id="GO:0006508">
    <property type="term" value="P:proteolysis"/>
    <property type="evidence" value="ECO:0007669"/>
    <property type="project" value="UniProtKB-KW"/>
</dbReference>
<dbReference type="CDD" id="cd00433">
    <property type="entry name" value="Peptidase_M17"/>
    <property type="match status" value="1"/>
</dbReference>
<dbReference type="FunFam" id="3.40.220.10:FF:000011">
    <property type="entry name" value="Leucine aminopeptidase 2, chloroplastic"/>
    <property type="match status" value="1"/>
</dbReference>
<dbReference type="FunFam" id="3.40.630.10:FF:000033">
    <property type="entry name" value="M17 leucyl aminopeptidase"/>
    <property type="match status" value="1"/>
</dbReference>
<dbReference type="Gene3D" id="3.40.220.10">
    <property type="entry name" value="Leucine Aminopeptidase, subunit E, domain 1"/>
    <property type="match status" value="1"/>
</dbReference>
<dbReference type="Gene3D" id="3.40.630.10">
    <property type="entry name" value="Zn peptidases"/>
    <property type="match status" value="1"/>
</dbReference>
<dbReference type="HAMAP" id="MF_00181">
    <property type="entry name" value="Cytosol_peptidase_M17"/>
    <property type="match status" value="1"/>
</dbReference>
<dbReference type="InterPro" id="IPR011356">
    <property type="entry name" value="Leucine_aapep/pepB"/>
</dbReference>
<dbReference type="InterPro" id="IPR043472">
    <property type="entry name" value="Macro_dom-like"/>
</dbReference>
<dbReference type="InterPro" id="IPR000819">
    <property type="entry name" value="Peptidase_M17_C"/>
</dbReference>
<dbReference type="InterPro" id="IPR023042">
    <property type="entry name" value="Peptidase_M17_leu_NH2_pept"/>
</dbReference>
<dbReference type="InterPro" id="IPR008283">
    <property type="entry name" value="Peptidase_M17_N"/>
</dbReference>
<dbReference type="NCBIfam" id="NF002076">
    <property type="entry name" value="PRK00913.2-3"/>
    <property type="match status" value="1"/>
</dbReference>
<dbReference type="PANTHER" id="PTHR11963:SF23">
    <property type="entry name" value="CYTOSOL AMINOPEPTIDASE"/>
    <property type="match status" value="1"/>
</dbReference>
<dbReference type="PANTHER" id="PTHR11963">
    <property type="entry name" value="LEUCINE AMINOPEPTIDASE-RELATED"/>
    <property type="match status" value="1"/>
</dbReference>
<dbReference type="Pfam" id="PF00883">
    <property type="entry name" value="Peptidase_M17"/>
    <property type="match status" value="1"/>
</dbReference>
<dbReference type="Pfam" id="PF02789">
    <property type="entry name" value="Peptidase_M17_N"/>
    <property type="match status" value="1"/>
</dbReference>
<dbReference type="PRINTS" id="PR00481">
    <property type="entry name" value="LAMNOPPTDASE"/>
</dbReference>
<dbReference type="SUPFAM" id="SSF52949">
    <property type="entry name" value="Macro domain-like"/>
    <property type="match status" value="1"/>
</dbReference>
<dbReference type="SUPFAM" id="SSF53187">
    <property type="entry name" value="Zn-dependent exopeptidases"/>
    <property type="match status" value="1"/>
</dbReference>
<dbReference type="PROSITE" id="PS00631">
    <property type="entry name" value="CYTOSOL_AP"/>
    <property type="match status" value="1"/>
</dbReference>
<name>AMPL2_ARATH</name>
<sequence>MAVTLVTSFASSSSRFHFRSFSSSPSSLSSCFVRFQFPSRLRLAFAVTPLYSSSRAMAHTISHATLGLTQANSVDHPKISFSGKEIDVTEWKGDILAVGVTEKDMAKDVNSKFENPILKKLDAHLGGLLADVSSEEDFSGKPGQSTVLRLPGLGSKRVGLIGLGKSASTPSAFQSLGEAVAAAAKASQASSVAVVLASSESVSNESKLCSASAIASGTVLGLFEDSRYKSESKKPSLKSVDIIGFGSGPELEKKLKYAEHVSYGVIFGKELVNSPANVLTPAVLAEEALNLASMYSDVMTANILNEEQCKELKMGSYLAVAAASANPPHFIHLIYKPSSGPVKTKLALVGKGLTFDSGGYNIKTGPGCLIELMKFDMGGSAAVLGAAKAIGQIKPPGVEVHFIVAACENMISGTGMRPGDVLTASNGKTIEVNNTDAEGRLTLADALVYACNQGVDKVVDLATLTGACIIALGTSMAGIYTPSDKLAKEVIAASERSGEKLWRMPMEESYWEMMKSGVADMVNTGGRAGGSITAALFLKQFVSEDVEWMHIDMAGPVWNEKKKAATGFGVATLVEWVQNHSSS</sequence>
<gene>
    <name evidence="7" type="primary">LAP2</name>
    <name type="ordered locus">At4g30920</name>
    <name type="ORF">F6I18.170</name>
</gene>
<feature type="transit peptide" description="Chloroplast" evidence="4">
    <location>
        <begin position="1"/>
        <end position="70"/>
    </location>
</feature>
<feature type="chain" id="PRO_0000045812" description="Leucine aminopeptidase 2, chloroplastic">
    <location>
        <begin position="71"/>
        <end position="583"/>
    </location>
</feature>
<feature type="active site" evidence="4">
    <location>
        <position position="363"/>
    </location>
</feature>
<feature type="active site" evidence="4">
    <location>
        <position position="440"/>
    </location>
</feature>
<feature type="binding site" evidence="2">
    <location>
        <position position="351"/>
    </location>
    <ligand>
        <name>Mn(2+)</name>
        <dbReference type="ChEBI" id="CHEBI:29035"/>
        <label>1</label>
    </ligand>
</feature>
<feature type="binding site" evidence="2">
    <location>
        <position position="356"/>
    </location>
    <ligand>
        <name>Mn(2+)</name>
        <dbReference type="ChEBI" id="CHEBI:29035"/>
        <label>1</label>
    </ligand>
</feature>
<feature type="binding site" evidence="2">
    <location>
        <position position="356"/>
    </location>
    <ligand>
        <name>Mn(2+)</name>
        <dbReference type="ChEBI" id="CHEBI:29035"/>
        <label>2</label>
    </ligand>
</feature>
<feature type="binding site" evidence="2">
    <location>
        <position position="376"/>
    </location>
    <ligand>
        <name>Mn(2+)</name>
        <dbReference type="ChEBI" id="CHEBI:29035"/>
        <label>1</label>
    </ligand>
</feature>
<feature type="binding site" evidence="2">
    <location>
        <position position="436"/>
    </location>
    <ligand>
        <name>Mn(2+)</name>
        <dbReference type="ChEBI" id="CHEBI:29035"/>
        <label>2</label>
    </ligand>
</feature>
<feature type="binding site" evidence="2">
    <location>
        <position position="438"/>
    </location>
    <ligand>
        <name>Mn(2+)</name>
        <dbReference type="ChEBI" id="CHEBI:29035"/>
        <label>1</label>
    </ligand>
</feature>
<feature type="binding site" evidence="2">
    <location>
        <position position="438"/>
    </location>
    <ligand>
        <name>Mn(2+)</name>
        <dbReference type="ChEBI" id="CHEBI:29035"/>
        <label>2</label>
    </ligand>
</feature>
<feature type="sequence conflict" description="In Ref. 3; AAL11627/AAO11568." evidence="8" ref="3">
    <original>W</original>
    <variation>G</variation>
    <location>
        <position position="91"/>
    </location>
</feature>
<feature type="sequence conflict" description="In Ref. 3; AAL11627/AAO11568." evidence="8" ref="3">
    <original>D</original>
    <variation>G</variation>
    <location>
        <position position="545"/>
    </location>
</feature>